<feature type="chain" id="PRO_1000015426" description="Large-conductance mechanosensitive channel">
    <location>
        <begin position="1"/>
        <end position="136"/>
    </location>
</feature>
<feature type="transmembrane region" description="Helical" evidence="1">
    <location>
        <begin position="9"/>
        <end position="29"/>
    </location>
</feature>
<feature type="transmembrane region" description="Helical" evidence="1">
    <location>
        <begin position="79"/>
        <end position="99"/>
    </location>
</feature>
<proteinExistence type="inferred from homology"/>
<accession>A0KSJ1</accession>
<sequence>MSLIKEFKAFASRGNVIDMAVGIIIGAAFGKIVSSFVADIIMPPIGIILGGVNFSDLSIVLQAAQGDAPAVVIAYGKFIQTIIDFTIIAFAIFMGLKAINSLKRKQEEAPKAPPAPTKDQELLSEIRDLLKAQQEK</sequence>
<organism>
    <name type="scientific">Shewanella sp. (strain ANA-3)</name>
    <dbReference type="NCBI Taxonomy" id="94122"/>
    <lineage>
        <taxon>Bacteria</taxon>
        <taxon>Pseudomonadati</taxon>
        <taxon>Pseudomonadota</taxon>
        <taxon>Gammaproteobacteria</taxon>
        <taxon>Alteromonadales</taxon>
        <taxon>Shewanellaceae</taxon>
        <taxon>Shewanella</taxon>
    </lineage>
</organism>
<keyword id="KW-0997">Cell inner membrane</keyword>
<keyword id="KW-1003">Cell membrane</keyword>
<keyword id="KW-0407">Ion channel</keyword>
<keyword id="KW-0406">Ion transport</keyword>
<keyword id="KW-0472">Membrane</keyword>
<keyword id="KW-0812">Transmembrane</keyword>
<keyword id="KW-1133">Transmembrane helix</keyword>
<keyword id="KW-0813">Transport</keyword>
<name>MSCL_SHESA</name>
<dbReference type="EMBL" id="CP000469">
    <property type="protein sequence ID" value="ABK46760.1"/>
    <property type="molecule type" value="Genomic_DNA"/>
</dbReference>
<dbReference type="RefSeq" id="WP_011715722.1">
    <property type="nucleotide sequence ID" value="NC_008577.1"/>
</dbReference>
<dbReference type="SMR" id="A0KSJ1"/>
<dbReference type="STRING" id="94122.Shewana3_0520"/>
<dbReference type="KEGG" id="shn:Shewana3_0520"/>
<dbReference type="eggNOG" id="COG1970">
    <property type="taxonomic scope" value="Bacteria"/>
</dbReference>
<dbReference type="HOGENOM" id="CLU_095787_0_0_6"/>
<dbReference type="OrthoDB" id="9810350at2"/>
<dbReference type="Proteomes" id="UP000002589">
    <property type="component" value="Chromosome"/>
</dbReference>
<dbReference type="GO" id="GO:0005886">
    <property type="term" value="C:plasma membrane"/>
    <property type="evidence" value="ECO:0007669"/>
    <property type="project" value="UniProtKB-SubCell"/>
</dbReference>
<dbReference type="GO" id="GO:0008381">
    <property type="term" value="F:mechanosensitive monoatomic ion channel activity"/>
    <property type="evidence" value="ECO:0007669"/>
    <property type="project" value="UniProtKB-UniRule"/>
</dbReference>
<dbReference type="FunFam" id="1.10.1200.120:FF:000001">
    <property type="entry name" value="Large-conductance mechanosensitive channel"/>
    <property type="match status" value="1"/>
</dbReference>
<dbReference type="Gene3D" id="1.10.1200.120">
    <property type="entry name" value="Large-conductance mechanosensitive channel, MscL, domain 1"/>
    <property type="match status" value="1"/>
</dbReference>
<dbReference type="HAMAP" id="MF_00115">
    <property type="entry name" value="MscL"/>
    <property type="match status" value="1"/>
</dbReference>
<dbReference type="InterPro" id="IPR019823">
    <property type="entry name" value="Mechanosensitive_channel_CS"/>
</dbReference>
<dbReference type="InterPro" id="IPR001185">
    <property type="entry name" value="MS_channel"/>
</dbReference>
<dbReference type="InterPro" id="IPR037673">
    <property type="entry name" value="MSC/AndL"/>
</dbReference>
<dbReference type="InterPro" id="IPR036019">
    <property type="entry name" value="MscL_channel"/>
</dbReference>
<dbReference type="NCBIfam" id="TIGR00220">
    <property type="entry name" value="mscL"/>
    <property type="match status" value="1"/>
</dbReference>
<dbReference type="NCBIfam" id="NF001843">
    <property type="entry name" value="PRK00567.1-4"/>
    <property type="match status" value="1"/>
</dbReference>
<dbReference type="PANTHER" id="PTHR30266:SF2">
    <property type="entry name" value="LARGE-CONDUCTANCE MECHANOSENSITIVE CHANNEL"/>
    <property type="match status" value="1"/>
</dbReference>
<dbReference type="PANTHER" id="PTHR30266">
    <property type="entry name" value="MECHANOSENSITIVE CHANNEL MSCL"/>
    <property type="match status" value="1"/>
</dbReference>
<dbReference type="Pfam" id="PF01741">
    <property type="entry name" value="MscL"/>
    <property type="match status" value="1"/>
</dbReference>
<dbReference type="PRINTS" id="PR01264">
    <property type="entry name" value="MECHCHANNEL"/>
</dbReference>
<dbReference type="SUPFAM" id="SSF81330">
    <property type="entry name" value="Gated mechanosensitive channel"/>
    <property type="match status" value="1"/>
</dbReference>
<dbReference type="PROSITE" id="PS01327">
    <property type="entry name" value="MSCL"/>
    <property type="match status" value="1"/>
</dbReference>
<comment type="function">
    <text evidence="1">Channel that opens in response to stretch forces in the membrane lipid bilayer. May participate in the regulation of osmotic pressure changes within the cell.</text>
</comment>
<comment type="subunit">
    <text evidence="1">Homopentamer.</text>
</comment>
<comment type="subcellular location">
    <subcellularLocation>
        <location evidence="1">Cell inner membrane</location>
        <topology evidence="1">Multi-pass membrane protein</topology>
    </subcellularLocation>
</comment>
<comment type="similarity">
    <text evidence="1">Belongs to the MscL family.</text>
</comment>
<evidence type="ECO:0000255" key="1">
    <source>
        <dbReference type="HAMAP-Rule" id="MF_00115"/>
    </source>
</evidence>
<reference key="1">
    <citation type="submission" date="2006-09" db="EMBL/GenBank/DDBJ databases">
        <title>Complete sequence of chromosome 1 of Shewanella sp. ANA-3.</title>
        <authorList>
            <person name="Copeland A."/>
            <person name="Lucas S."/>
            <person name="Lapidus A."/>
            <person name="Barry K."/>
            <person name="Detter J.C."/>
            <person name="Glavina del Rio T."/>
            <person name="Hammon N."/>
            <person name="Israni S."/>
            <person name="Dalin E."/>
            <person name="Tice H."/>
            <person name="Pitluck S."/>
            <person name="Chertkov O."/>
            <person name="Brettin T."/>
            <person name="Bruce D."/>
            <person name="Han C."/>
            <person name="Tapia R."/>
            <person name="Gilna P."/>
            <person name="Schmutz J."/>
            <person name="Larimer F."/>
            <person name="Land M."/>
            <person name="Hauser L."/>
            <person name="Kyrpides N."/>
            <person name="Kim E."/>
            <person name="Newman D."/>
            <person name="Salticov C."/>
            <person name="Konstantinidis K."/>
            <person name="Klappenback J."/>
            <person name="Tiedje J."/>
            <person name="Richardson P."/>
        </authorList>
    </citation>
    <scope>NUCLEOTIDE SEQUENCE [LARGE SCALE GENOMIC DNA]</scope>
    <source>
        <strain>ANA-3</strain>
    </source>
</reference>
<gene>
    <name evidence="1" type="primary">mscL</name>
    <name type="ordered locus">Shewana3_0520</name>
</gene>
<protein>
    <recommendedName>
        <fullName evidence="1">Large-conductance mechanosensitive channel</fullName>
    </recommendedName>
</protein>